<accession>Q7VNT5</accession>
<reference key="1">
    <citation type="submission" date="2003-06" db="EMBL/GenBank/DDBJ databases">
        <title>The complete genome sequence of Haemophilus ducreyi.</title>
        <authorList>
            <person name="Munson R.S. Jr."/>
            <person name="Ray W.C."/>
            <person name="Mahairas G."/>
            <person name="Sabo P."/>
            <person name="Mungur R."/>
            <person name="Johnson L."/>
            <person name="Nguyen D."/>
            <person name="Wang J."/>
            <person name="Forst C."/>
            <person name="Hood L."/>
        </authorList>
    </citation>
    <scope>NUCLEOTIDE SEQUENCE [LARGE SCALE GENOMIC DNA]</scope>
    <source>
        <strain>35000HP / ATCC 700724</strain>
    </source>
</reference>
<sequence length="207" mass="22217">MLDLSIIAYLLIAICLIALIFGALLGYFSVKLKVEADPIVDQIDAILPQSQCGQCGYPGCKPYAEAIANGDQITKCVPGGQPLVVKIAELMGVDVPSMDNTAVPEVKVALIHEDMCIGCTKCIQACPVDAIIGTNKAMHTVVADLCTGCELCVAPCPTNCIEMIKVKQNPRSWNWQFNPDLIIPIVNTTELQKKMIVGSAKGEIQND</sequence>
<proteinExistence type="inferred from homology"/>
<protein>
    <recommendedName>
        <fullName evidence="1">Ion-translocating oxidoreductase complex subunit B</fullName>
        <ecNumber evidence="1">7.-.-.-</ecNumber>
    </recommendedName>
    <alternativeName>
        <fullName evidence="1">Rnf electron transport complex subunit B</fullName>
    </alternativeName>
</protein>
<evidence type="ECO:0000255" key="1">
    <source>
        <dbReference type="HAMAP-Rule" id="MF_00463"/>
    </source>
</evidence>
<organism>
    <name type="scientific">Haemophilus ducreyi (strain 35000HP / ATCC 700724)</name>
    <dbReference type="NCBI Taxonomy" id="233412"/>
    <lineage>
        <taxon>Bacteria</taxon>
        <taxon>Pseudomonadati</taxon>
        <taxon>Pseudomonadota</taxon>
        <taxon>Gammaproteobacteria</taxon>
        <taxon>Pasteurellales</taxon>
        <taxon>Pasteurellaceae</taxon>
        <taxon>Haemophilus</taxon>
    </lineage>
</organism>
<dbReference type="EC" id="7.-.-.-" evidence="1"/>
<dbReference type="EMBL" id="AE017143">
    <property type="protein sequence ID" value="AAP95364.1"/>
    <property type="molecule type" value="Genomic_DNA"/>
</dbReference>
<dbReference type="RefSeq" id="WP_010944417.1">
    <property type="nucleotide sequence ID" value="NC_002940.2"/>
</dbReference>
<dbReference type="STRING" id="233412.HD_0397"/>
<dbReference type="KEGG" id="hdu:HD_0397"/>
<dbReference type="eggNOG" id="COG2878">
    <property type="taxonomic scope" value="Bacteria"/>
</dbReference>
<dbReference type="HOGENOM" id="CLU_063448_2_0_6"/>
<dbReference type="OrthoDB" id="9789936at2"/>
<dbReference type="Proteomes" id="UP000001022">
    <property type="component" value="Chromosome"/>
</dbReference>
<dbReference type="GO" id="GO:0005886">
    <property type="term" value="C:plasma membrane"/>
    <property type="evidence" value="ECO:0007669"/>
    <property type="project" value="UniProtKB-SubCell"/>
</dbReference>
<dbReference type="GO" id="GO:0051539">
    <property type="term" value="F:4 iron, 4 sulfur cluster binding"/>
    <property type="evidence" value="ECO:0007669"/>
    <property type="project" value="UniProtKB-UniRule"/>
</dbReference>
<dbReference type="GO" id="GO:0009055">
    <property type="term" value="F:electron transfer activity"/>
    <property type="evidence" value="ECO:0007669"/>
    <property type="project" value="InterPro"/>
</dbReference>
<dbReference type="GO" id="GO:0046872">
    <property type="term" value="F:metal ion binding"/>
    <property type="evidence" value="ECO:0007669"/>
    <property type="project" value="UniProtKB-KW"/>
</dbReference>
<dbReference type="GO" id="GO:0022900">
    <property type="term" value="P:electron transport chain"/>
    <property type="evidence" value="ECO:0007669"/>
    <property type="project" value="UniProtKB-UniRule"/>
</dbReference>
<dbReference type="FunFam" id="1.10.15.40:FF:000001">
    <property type="entry name" value="Ion-translocating oxidoreductase complex subunit B"/>
    <property type="match status" value="1"/>
</dbReference>
<dbReference type="Gene3D" id="3.30.70.20">
    <property type="match status" value="1"/>
</dbReference>
<dbReference type="Gene3D" id="1.10.15.40">
    <property type="entry name" value="Electron transport complex subunit B, putative Fe-S cluster"/>
    <property type="match status" value="1"/>
</dbReference>
<dbReference type="HAMAP" id="MF_00463">
    <property type="entry name" value="RsxB_RnfB"/>
    <property type="match status" value="1"/>
</dbReference>
<dbReference type="InterPro" id="IPR007202">
    <property type="entry name" value="4Fe-4S_dom"/>
</dbReference>
<dbReference type="InterPro" id="IPR017896">
    <property type="entry name" value="4Fe4S_Fe-S-bd"/>
</dbReference>
<dbReference type="InterPro" id="IPR017900">
    <property type="entry name" value="4Fe4S_Fe_S_CS"/>
</dbReference>
<dbReference type="InterPro" id="IPR010207">
    <property type="entry name" value="Elect_transpt_cplx_RnfB/RsxB"/>
</dbReference>
<dbReference type="InterPro" id="IPR016463">
    <property type="entry name" value="RnfB/RsxB_Proteobac"/>
</dbReference>
<dbReference type="InterPro" id="IPR050294">
    <property type="entry name" value="RnfB_subfamily"/>
</dbReference>
<dbReference type="NCBIfam" id="NF003475">
    <property type="entry name" value="PRK05113.1"/>
    <property type="match status" value="1"/>
</dbReference>
<dbReference type="NCBIfam" id="TIGR01944">
    <property type="entry name" value="rnfB"/>
    <property type="match status" value="1"/>
</dbReference>
<dbReference type="PANTHER" id="PTHR42859:SF3">
    <property type="entry name" value="ION-TRANSLOCATING OXIDOREDUCTASE COMPLEX SUBUNIT B"/>
    <property type="match status" value="1"/>
</dbReference>
<dbReference type="PANTHER" id="PTHR42859">
    <property type="entry name" value="OXIDOREDUCTASE"/>
    <property type="match status" value="1"/>
</dbReference>
<dbReference type="Pfam" id="PF14697">
    <property type="entry name" value="Fer4_21"/>
    <property type="match status" value="1"/>
</dbReference>
<dbReference type="Pfam" id="PF04060">
    <property type="entry name" value="FeS"/>
    <property type="match status" value="1"/>
</dbReference>
<dbReference type="PIRSF" id="PIRSF005784">
    <property type="entry name" value="Elect_transpt_RnfB"/>
    <property type="match status" value="1"/>
</dbReference>
<dbReference type="SUPFAM" id="SSF54862">
    <property type="entry name" value="4Fe-4S ferredoxins"/>
    <property type="match status" value="1"/>
</dbReference>
<dbReference type="PROSITE" id="PS51656">
    <property type="entry name" value="4FE4S"/>
    <property type="match status" value="1"/>
</dbReference>
<dbReference type="PROSITE" id="PS00198">
    <property type="entry name" value="4FE4S_FER_1"/>
    <property type="match status" value="2"/>
</dbReference>
<dbReference type="PROSITE" id="PS51379">
    <property type="entry name" value="4FE4S_FER_2"/>
    <property type="match status" value="2"/>
</dbReference>
<feature type="chain" id="PRO_0000216273" description="Ion-translocating oxidoreductase complex subunit B">
    <location>
        <begin position="1"/>
        <end position="207"/>
    </location>
</feature>
<feature type="domain" description="4Fe-4S" evidence="1">
    <location>
        <begin position="35"/>
        <end position="93"/>
    </location>
</feature>
<feature type="domain" description="4Fe-4S ferredoxin-type 1" evidence="1">
    <location>
        <begin position="107"/>
        <end position="136"/>
    </location>
</feature>
<feature type="domain" description="4Fe-4S ferredoxin-type 2" evidence="1">
    <location>
        <begin position="137"/>
        <end position="166"/>
    </location>
</feature>
<feature type="region of interest" description="Hydrophobic" evidence="1">
    <location>
        <begin position="1"/>
        <end position="29"/>
    </location>
</feature>
<feature type="binding site" evidence="1">
    <location>
        <position position="52"/>
    </location>
    <ligand>
        <name>[4Fe-4S] cluster</name>
        <dbReference type="ChEBI" id="CHEBI:49883"/>
        <label>1</label>
    </ligand>
</feature>
<feature type="binding site" evidence="1">
    <location>
        <position position="55"/>
    </location>
    <ligand>
        <name>[4Fe-4S] cluster</name>
        <dbReference type="ChEBI" id="CHEBI:49883"/>
        <label>1</label>
    </ligand>
</feature>
<feature type="binding site" evidence="1">
    <location>
        <position position="60"/>
    </location>
    <ligand>
        <name>[4Fe-4S] cluster</name>
        <dbReference type="ChEBI" id="CHEBI:49883"/>
        <label>1</label>
    </ligand>
</feature>
<feature type="binding site" evidence="1">
    <location>
        <position position="76"/>
    </location>
    <ligand>
        <name>[4Fe-4S] cluster</name>
        <dbReference type="ChEBI" id="CHEBI:49883"/>
        <label>1</label>
    </ligand>
</feature>
<feature type="binding site" evidence="1">
    <location>
        <position position="116"/>
    </location>
    <ligand>
        <name>[4Fe-4S] cluster</name>
        <dbReference type="ChEBI" id="CHEBI:49883"/>
        <label>2</label>
    </ligand>
</feature>
<feature type="binding site" evidence="1">
    <location>
        <position position="119"/>
    </location>
    <ligand>
        <name>[4Fe-4S] cluster</name>
        <dbReference type="ChEBI" id="CHEBI:49883"/>
        <label>2</label>
    </ligand>
</feature>
<feature type="binding site" evidence="1">
    <location>
        <position position="122"/>
    </location>
    <ligand>
        <name>[4Fe-4S] cluster</name>
        <dbReference type="ChEBI" id="CHEBI:49883"/>
        <label>2</label>
    </ligand>
</feature>
<feature type="binding site" evidence="1">
    <location>
        <position position="126"/>
    </location>
    <ligand>
        <name>[4Fe-4S] cluster</name>
        <dbReference type="ChEBI" id="CHEBI:49883"/>
        <label>3</label>
    </ligand>
</feature>
<feature type="binding site" evidence="1">
    <location>
        <position position="146"/>
    </location>
    <ligand>
        <name>[4Fe-4S] cluster</name>
        <dbReference type="ChEBI" id="CHEBI:49883"/>
        <label>3</label>
    </ligand>
</feature>
<feature type="binding site" evidence="1">
    <location>
        <position position="149"/>
    </location>
    <ligand>
        <name>[4Fe-4S] cluster</name>
        <dbReference type="ChEBI" id="CHEBI:49883"/>
        <label>3</label>
    </ligand>
</feature>
<feature type="binding site" evidence="1">
    <location>
        <position position="152"/>
    </location>
    <ligand>
        <name>[4Fe-4S] cluster</name>
        <dbReference type="ChEBI" id="CHEBI:49883"/>
        <label>3</label>
    </ligand>
</feature>
<feature type="binding site" evidence="1">
    <location>
        <position position="156"/>
    </location>
    <ligand>
        <name>[4Fe-4S] cluster</name>
        <dbReference type="ChEBI" id="CHEBI:49883"/>
        <label>2</label>
    </ligand>
</feature>
<name>RNFB_HAEDU</name>
<gene>
    <name evidence="1" type="primary">rnfB</name>
    <name type="ordered locus">HD_0397</name>
</gene>
<comment type="function">
    <text evidence="1">Part of a membrane-bound complex that couples electron transfer with translocation of ions across the membrane.</text>
</comment>
<comment type="cofactor">
    <cofactor evidence="1">
        <name>[4Fe-4S] cluster</name>
        <dbReference type="ChEBI" id="CHEBI:49883"/>
    </cofactor>
    <text evidence="1">Binds 3 [4Fe-4S] clusters.</text>
</comment>
<comment type="subunit">
    <text evidence="1">The complex is composed of six subunits: RnfA, RnfB, RnfC, RnfD, RnfE and RnfG.</text>
</comment>
<comment type="subcellular location">
    <subcellularLocation>
        <location evidence="1">Cell inner membrane</location>
    </subcellularLocation>
</comment>
<comment type="similarity">
    <text evidence="1">Belongs to the 4Fe4S bacterial-type ferredoxin family. RnfB subfamily.</text>
</comment>
<keyword id="KW-0004">4Fe-4S</keyword>
<keyword id="KW-0997">Cell inner membrane</keyword>
<keyword id="KW-1003">Cell membrane</keyword>
<keyword id="KW-0249">Electron transport</keyword>
<keyword id="KW-0408">Iron</keyword>
<keyword id="KW-0411">Iron-sulfur</keyword>
<keyword id="KW-0472">Membrane</keyword>
<keyword id="KW-0479">Metal-binding</keyword>
<keyword id="KW-1185">Reference proteome</keyword>
<keyword id="KW-0677">Repeat</keyword>
<keyword id="KW-1278">Translocase</keyword>
<keyword id="KW-0813">Transport</keyword>